<protein>
    <recommendedName>
        <fullName evidence="1">UDP-N-acetylenolpyruvoylglucosamine reductase</fullName>
        <ecNumber evidence="1">1.3.1.98</ecNumber>
    </recommendedName>
    <alternativeName>
        <fullName evidence="1">UDP-N-acetylmuramate dehydrogenase</fullName>
    </alternativeName>
</protein>
<comment type="function">
    <text evidence="1">Cell wall formation.</text>
</comment>
<comment type="catalytic activity">
    <reaction evidence="1">
        <text>UDP-N-acetyl-alpha-D-muramate + NADP(+) = UDP-N-acetyl-3-O-(1-carboxyvinyl)-alpha-D-glucosamine + NADPH + H(+)</text>
        <dbReference type="Rhea" id="RHEA:12248"/>
        <dbReference type="ChEBI" id="CHEBI:15378"/>
        <dbReference type="ChEBI" id="CHEBI:57783"/>
        <dbReference type="ChEBI" id="CHEBI:58349"/>
        <dbReference type="ChEBI" id="CHEBI:68483"/>
        <dbReference type="ChEBI" id="CHEBI:70757"/>
        <dbReference type="EC" id="1.3.1.98"/>
    </reaction>
</comment>
<comment type="cofactor">
    <cofactor evidence="1">
        <name>FAD</name>
        <dbReference type="ChEBI" id="CHEBI:57692"/>
    </cofactor>
</comment>
<comment type="pathway">
    <text evidence="1">Cell wall biogenesis; peptidoglycan biosynthesis.</text>
</comment>
<comment type="subcellular location">
    <subcellularLocation>
        <location evidence="1">Cytoplasm</location>
    </subcellularLocation>
</comment>
<comment type="similarity">
    <text evidence="1">Belongs to the MurB family.</text>
</comment>
<reference key="1">
    <citation type="submission" date="2007-09" db="EMBL/GenBank/DDBJ databases">
        <title>Complete genome sequence of Rickettsia akari.</title>
        <authorList>
            <person name="Madan A."/>
            <person name="Fahey J."/>
            <person name="Helton E."/>
            <person name="Ketteman M."/>
            <person name="Madan A."/>
            <person name="Rodrigues S."/>
            <person name="Sanchez A."/>
            <person name="Whiting M."/>
            <person name="Dasch G."/>
            <person name="Eremeeva M."/>
        </authorList>
    </citation>
    <scope>NUCLEOTIDE SEQUENCE [LARGE SCALE GENOMIC DNA]</scope>
    <source>
        <strain>Hartford</strain>
    </source>
</reference>
<name>MURB_RICAH</name>
<evidence type="ECO:0000255" key="1">
    <source>
        <dbReference type="HAMAP-Rule" id="MF_00037"/>
    </source>
</evidence>
<sequence length="295" mass="32626">MLILPTVKGEYQKDYNLKHLTWFKVGGDAEIFFKPLDSEDLASFLIQNRQKLPITTFGAGSNIIIRDGGIEGVVIKLGQNFSNIEFIDNHLIVGSSCLNYNLAKFCQANDISGFEFLVGIPGTIGGGVAMNAGAYGSEFKDIIVRIEAIDFAGNFRTFTNAESGFKYRGNNLPKDLIILKAVFKVNKGDSENILLRMNEINNTRSLTQPIKERTGGSTFANPEGLKSWELIDKAGLRGYRIGGASMSELHCNFMINNGDATSKDLEDLGDFVRQKVFEDSGVELKWEIKIIGKYV</sequence>
<feature type="chain" id="PRO_1000002907" description="UDP-N-acetylenolpyruvoylglucosamine reductase">
    <location>
        <begin position="1"/>
        <end position="295"/>
    </location>
</feature>
<feature type="domain" description="FAD-binding PCMH-type" evidence="1">
    <location>
        <begin position="24"/>
        <end position="188"/>
    </location>
</feature>
<feature type="active site" evidence="1">
    <location>
        <position position="168"/>
    </location>
</feature>
<feature type="active site" description="Proton donor" evidence="1">
    <location>
        <position position="217"/>
    </location>
</feature>
<feature type="active site" evidence="1">
    <location>
        <position position="287"/>
    </location>
</feature>
<dbReference type="EC" id="1.3.1.98" evidence="1"/>
<dbReference type="EMBL" id="CP000847">
    <property type="protein sequence ID" value="ABV74672.1"/>
    <property type="molecule type" value="Genomic_DNA"/>
</dbReference>
<dbReference type="RefSeq" id="WP_012149306.1">
    <property type="nucleotide sequence ID" value="NC_009881.1"/>
</dbReference>
<dbReference type="SMR" id="A8GMP7"/>
<dbReference type="STRING" id="293614.A1C_01805"/>
<dbReference type="KEGG" id="rak:A1C_01805"/>
<dbReference type="eggNOG" id="COG0812">
    <property type="taxonomic scope" value="Bacteria"/>
</dbReference>
<dbReference type="HOGENOM" id="CLU_035304_1_0_5"/>
<dbReference type="UniPathway" id="UPA00219"/>
<dbReference type="Proteomes" id="UP000006830">
    <property type="component" value="Chromosome"/>
</dbReference>
<dbReference type="GO" id="GO:0005829">
    <property type="term" value="C:cytosol"/>
    <property type="evidence" value="ECO:0007669"/>
    <property type="project" value="TreeGrafter"/>
</dbReference>
<dbReference type="GO" id="GO:0071949">
    <property type="term" value="F:FAD binding"/>
    <property type="evidence" value="ECO:0007669"/>
    <property type="project" value="InterPro"/>
</dbReference>
<dbReference type="GO" id="GO:0008762">
    <property type="term" value="F:UDP-N-acetylmuramate dehydrogenase activity"/>
    <property type="evidence" value="ECO:0007669"/>
    <property type="project" value="UniProtKB-UniRule"/>
</dbReference>
<dbReference type="GO" id="GO:0051301">
    <property type="term" value="P:cell division"/>
    <property type="evidence" value="ECO:0007669"/>
    <property type="project" value="UniProtKB-KW"/>
</dbReference>
<dbReference type="GO" id="GO:0071555">
    <property type="term" value="P:cell wall organization"/>
    <property type="evidence" value="ECO:0007669"/>
    <property type="project" value="UniProtKB-KW"/>
</dbReference>
<dbReference type="GO" id="GO:0009252">
    <property type="term" value="P:peptidoglycan biosynthetic process"/>
    <property type="evidence" value="ECO:0007669"/>
    <property type="project" value="UniProtKB-UniRule"/>
</dbReference>
<dbReference type="GO" id="GO:0008360">
    <property type="term" value="P:regulation of cell shape"/>
    <property type="evidence" value="ECO:0007669"/>
    <property type="project" value="UniProtKB-KW"/>
</dbReference>
<dbReference type="Gene3D" id="3.30.465.10">
    <property type="match status" value="1"/>
</dbReference>
<dbReference type="Gene3D" id="3.90.78.10">
    <property type="entry name" value="UDP-N-acetylenolpyruvoylglucosamine reductase, C-terminal domain"/>
    <property type="match status" value="1"/>
</dbReference>
<dbReference type="Gene3D" id="3.30.43.10">
    <property type="entry name" value="Uridine Diphospho-n-acetylenolpyruvylglucosamine Reductase, domain 2"/>
    <property type="match status" value="1"/>
</dbReference>
<dbReference type="HAMAP" id="MF_00037">
    <property type="entry name" value="MurB"/>
    <property type="match status" value="1"/>
</dbReference>
<dbReference type="InterPro" id="IPR016166">
    <property type="entry name" value="FAD-bd_PCMH"/>
</dbReference>
<dbReference type="InterPro" id="IPR036318">
    <property type="entry name" value="FAD-bd_PCMH-like_sf"/>
</dbReference>
<dbReference type="InterPro" id="IPR016167">
    <property type="entry name" value="FAD-bd_PCMH_sub1"/>
</dbReference>
<dbReference type="InterPro" id="IPR016169">
    <property type="entry name" value="FAD-bd_PCMH_sub2"/>
</dbReference>
<dbReference type="InterPro" id="IPR003170">
    <property type="entry name" value="MurB"/>
</dbReference>
<dbReference type="InterPro" id="IPR011601">
    <property type="entry name" value="MurB_C"/>
</dbReference>
<dbReference type="InterPro" id="IPR036635">
    <property type="entry name" value="MurB_C_sf"/>
</dbReference>
<dbReference type="InterPro" id="IPR006094">
    <property type="entry name" value="Oxid_FAD_bind_N"/>
</dbReference>
<dbReference type="NCBIfam" id="TIGR00179">
    <property type="entry name" value="murB"/>
    <property type="match status" value="1"/>
</dbReference>
<dbReference type="NCBIfam" id="NF010480">
    <property type="entry name" value="PRK13905.1"/>
    <property type="match status" value="1"/>
</dbReference>
<dbReference type="PANTHER" id="PTHR21071">
    <property type="entry name" value="UDP-N-ACETYLENOLPYRUVOYLGLUCOSAMINE REDUCTASE"/>
    <property type="match status" value="1"/>
</dbReference>
<dbReference type="PANTHER" id="PTHR21071:SF4">
    <property type="entry name" value="UDP-N-ACETYLENOLPYRUVOYLGLUCOSAMINE REDUCTASE"/>
    <property type="match status" value="1"/>
</dbReference>
<dbReference type="Pfam" id="PF01565">
    <property type="entry name" value="FAD_binding_4"/>
    <property type="match status" value="1"/>
</dbReference>
<dbReference type="Pfam" id="PF02873">
    <property type="entry name" value="MurB_C"/>
    <property type="match status" value="1"/>
</dbReference>
<dbReference type="SUPFAM" id="SSF56176">
    <property type="entry name" value="FAD-binding/transporter-associated domain-like"/>
    <property type="match status" value="1"/>
</dbReference>
<dbReference type="SUPFAM" id="SSF56194">
    <property type="entry name" value="Uridine diphospho-N-Acetylenolpyruvylglucosamine reductase, MurB, C-terminal domain"/>
    <property type="match status" value="1"/>
</dbReference>
<dbReference type="PROSITE" id="PS51387">
    <property type="entry name" value="FAD_PCMH"/>
    <property type="match status" value="1"/>
</dbReference>
<gene>
    <name evidence="1" type="primary">murB</name>
    <name type="ordered locus">A1C_01805</name>
</gene>
<accession>A8GMP7</accession>
<keyword id="KW-0131">Cell cycle</keyword>
<keyword id="KW-0132">Cell division</keyword>
<keyword id="KW-0133">Cell shape</keyword>
<keyword id="KW-0961">Cell wall biogenesis/degradation</keyword>
<keyword id="KW-0963">Cytoplasm</keyword>
<keyword id="KW-0274">FAD</keyword>
<keyword id="KW-0285">Flavoprotein</keyword>
<keyword id="KW-0521">NADP</keyword>
<keyword id="KW-0560">Oxidoreductase</keyword>
<keyword id="KW-0573">Peptidoglycan synthesis</keyword>
<proteinExistence type="inferred from homology"/>
<organism>
    <name type="scientific">Rickettsia akari (strain Hartford)</name>
    <dbReference type="NCBI Taxonomy" id="293614"/>
    <lineage>
        <taxon>Bacteria</taxon>
        <taxon>Pseudomonadati</taxon>
        <taxon>Pseudomonadota</taxon>
        <taxon>Alphaproteobacteria</taxon>
        <taxon>Rickettsiales</taxon>
        <taxon>Rickettsiaceae</taxon>
        <taxon>Rickettsieae</taxon>
        <taxon>Rickettsia</taxon>
        <taxon>spotted fever group</taxon>
    </lineage>
</organism>